<sequence>MSETPIVSNHDLGKYVDQKVVIQGWVHGIRGSNARQFLSLRNSGKILQVLAEKEILGEEVFQTVKHLRQETSVTVIGNLVKNEKSPIGFELVMESIQIVGESENYPITPKEHGIDFLISQRHLWLRSSKQLAILRVRDSLSFAIRKYFHERDFLLIDTPILTGSVGESAGTLFSTEYFDLGNAYLAQTGQLYLETAIFAHNKVFCYGPTFRAEKSKTRRHLTEFWMVEAEVAFATHAENLKLQEDFVKTVIKETVQNSFQDLKVLERDPAPLLAYLEKDFPVIDYTKALEILQSKGEDIVWGDDINSEREQLLTVEFGGPVFIQKYPREAKAFYMKVNPEDPRTVLNADLIAPDGVGEIIGGSEREENYENIVQRLKEEKLPVESYDWYLDLRKYGSVPHSGFGLGSERLIAWICGLAHVRECIPFPRMMERLYP</sequence>
<accession>Q8F522</accession>
<gene>
    <name evidence="1" type="primary">asnS</name>
    <name type="ordered locus">LA_1866</name>
</gene>
<feature type="chain" id="PRO_0000176421" description="Asparagine--tRNA ligase">
    <location>
        <begin position="1"/>
        <end position="435"/>
    </location>
</feature>
<keyword id="KW-0030">Aminoacyl-tRNA synthetase</keyword>
<keyword id="KW-0067">ATP-binding</keyword>
<keyword id="KW-0963">Cytoplasm</keyword>
<keyword id="KW-0436">Ligase</keyword>
<keyword id="KW-0547">Nucleotide-binding</keyword>
<keyword id="KW-0648">Protein biosynthesis</keyword>
<keyword id="KW-1185">Reference proteome</keyword>
<name>SYN_LEPIN</name>
<organism>
    <name type="scientific">Leptospira interrogans serogroup Icterohaemorrhagiae serovar Lai (strain 56601)</name>
    <dbReference type="NCBI Taxonomy" id="189518"/>
    <lineage>
        <taxon>Bacteria</taxon>
        <taxon>Pseudomonadati</taxon>
        <taxon>Spirochaetota</taxon>
        <taxon>Spirochaetia</taxon>
        <taxon>Leptospirales</taxon>
        <taxon>Leptospiraceae</taxon>
        <taxon>Leptospira</taxon>
    </lineage>
</organism>
<evidence type="ECO:0000255" key="1">
    <source>
        <dbReference type="HAMAP-Rule" id="MF_00534"/>
    </source>
</evidence>
<comment type="catalytic activity">
    <reaction evidence="1">
        <text>tRNA(Asn) + L-asparagine + ATP = L-asparaginyl-tRNA(Asn) + AMP + diphosphate + H(+)</text>
        <dbReference type="Rhea" id="RHEA:11180"/>
        <dbReference type="Rhea" id="RHEA-COMP:9659"/>
        <dbReference type="Rhea" id="RHEA-COMP:9674"/>
        <dbReference type="ChEBI" id="CHEBI:15378"/>
        <dbReference type="ChEBI" id="CHEBI:30616"/>
        <dbReference type="ChEBI" id="CHEBI:33019"/>
        <dbReference type="ChEBI" id="CHEBI:58048"/>
        <dbReference type="ChEBI" id="CHEBI:78442"/>
        <dbReference type="ChEBI" id="CHEBI:78515"/>
        <dbReference type="ChEBI" id="CHEBI:456215"/>
        <dbReference type="EC" id="6.1.1.22"/>
    </reaction>
</comment>
<comment type="subunit">
    <text evidence="1">Homodimer.</text>
</comment>
<comment type="subcellular location">
    <subcellularLocation>
        <location evidence="1">Cytoplasm</location>
    </subcellularLocation>
</comment>
<comment type="similarity">
    <text evidence="1">Belongs to the class-II aminoacyl-tRNA synthetase family.</text>
</comment>
<proteinExistence type="inferred from homology"/>
<reference key="1">
    <citation type="journal article" date="2003" name="Nature">
        <title>Unique physiological and pathogenic features of Leptospira interrogans revealed by whole-genome sequencing.</title>
        <authorList>
            <person name="Ren S.-X."/>
            <person name="Fu G."/>
            <person name="Jiang X.-G."/>
            <person name="Zeng R."/>
            <person name="Miao Y.-G."/>
            <person name="Xu H."/>
            <person name="Zhang Y.-X."/>
            <person name="Xiong H."/>
            <person name="Lu G."/>
            <person name="Lu L.-F."/>
            <person name="Jiang H.-Q."/>
            <person name="Jia J."/>
            <person name="Tu Y.-F."/>
            <person name="Jiang J.-X."/>
            <person name="Gu W.-Y."/>
            <person name="Zhang Y.-Q."/>
            <person name="Cai Z."/>
            <person name="Sheng H.-H."/>
            <person name="Yin H.-F."/>
            <person name="Zhang Y."/>
            <person name="Zhu G.-F."/>
            <person name="Wan M."/>
            <person name="Huang H.-L."/>
            <person name="Qian Z."/>
            <person name="Wang S.-Y."/>
            <person name="Ma W."/>
            <person name="Yao Z.-J."/>
            <person name="Shen Y."/>
            <person name="Qiang B.-Q."/>
            <person name="Xia Q.-C."/>
            <person name="Guo X.-K."/>
            <person name="Danchin A."/>
            <person name="Saint Girons I."/>
            <person name="Somerville R.L."/>
            <person name="Wen Y.-M."/>
            <person name="Shi M.-H."/>
            <person name="Chen Z."/>
            <person name="Xu J.-G."/>
            <person name="Zhao G.-P."/>
        </authorList>
    </citation>
    <scope>NUCLEOTIDE SEQUENCE [LARGE SCALE GENOMIC DNA]</scope>
    <source>
        <strain>56601</strain>
    </source>
</reference>
<dbReference type="EC" id="6.1.1.22" evidence="1"/>
<dbReference type="EMBL" id="AE010300">
    <property type="protein sequence ID" value="AAN49065.1"/>
    <property type="molecule type" value="Genomic_DNA"/>
</dbReference>
<dbReference type="RefSeq" id="NP_712047.1">
    <property type="nucleotide sequence ID" value="NC_004342.2"/>
</dbReference>
<dbReference type="RefSeq" id="WP_000005296.1">
    <property type="nucleotide sequence ID" value="NC_004342.2"/>
</dbReference>
<dbReference type="SMR" id="Q8F522"/>
<dbReference type="FunCoup" id="Q8F522">
    <property type="interactions" value="420"/>
</dbReference>
<dbReference type="STRING" id="189518.LA_1866"/>
<dbReference type="PaxDb" id="189518-LA_1866"/>
<dbReference type="EnsemblBacteria" id="AAN49065">
    <property type="protein sequence ID" value="AAN49065"/>
    <property type="gene ID" value="LA_1866"/>
</dbReference>
<dbReference type="KEGG" id="lil:LA_1866"/>
<dbReference type="PATRIC" id="fig|189518.3.peg.1857"/>
<dbReference type="HOGENOM" id="CLU_004553_2_0_12"/>
<dbReference type="InParanoid" id="Q8F522"/>
<dbReference type="OrthoDB" id="9762036at2"/>
<dbReference type="Proteomes" id="UP000001408">
    <property type="component" value="Chromosome I"/>
</dbReference>
<dbReference type="GO" id="GO:0005737">
    <property type="term" value="C:cytoplasm"/>
    <property type="evidence" value="ECO:0007669"/>
    <property type="project" value="UniProtKB-SubCell"/>
</dbReference>
<dbReference type="GO" id="GO:0004816">
    <property type="term" value="F:asparagine-tRNA ligase activity"/>
    <property type="evidence" value="ECO:0007669"/>
    <property type="project" value="UniProtKB-UniRule"/>
</dbReference>
<dbReference type="GO" id="GO:0005524">
    <property type="term" value="F:ATP binding"/>
    <property type="evidence" value="ECO:0007669"/>
    <property type="project" value="UniProtKB-UniRule"/>
</dbReference>
<dbReference type="GO" id="GO:0003676">
    <property type="term" value="F:nucleic acid binding"/>
    <property type="evidence" value="ECO:0007669"/>
    <property type="project" value="InterPro"/>
</dbReference>
<dbReference type="GO" id="GO:0006421">
    <property type="term" value="P:asparaginyl-tRNA aminoacylation"/>
    <property type="evidence" value="ECO:0000318"/>
    <property type="project" value="GO_Central"/>
</dbReference>
<dbReference type="CDD" id="cd04323">
    <property type="entry name" value="AsnRS_cyto_like_N"/>
    <property type="match status" value="1"/>
</dbReference>
<dbReference type="CDD" id="cd00776">
    <property type="entry name" value="AsxRS_core"/>
    <property type="match status" value="1"/>
</dbReference>
<dbReference type="Gene3D" id="3.30.930.10">
    <property type="entry name" value="Bira Bifunctional Protein, Domain 2"/>
    <property type="match status" value="1"/>
</dbReference>
<dbReference type="Gene3D" id="2.40.50.140">
    <property type="entry name" value="Nucleic acid-binding proteins"/>
    <property type="match status" value="1"/>
</dbReference>
<dbReference type="HAMAP" id="MF_00534">
    <property type="entry name" value="Asn_tRNA_synth"/>
    <property type="match status" value="1"/>
</dbReference>
<dbReference type="InterPro" id="IPR004364">
    <property type="entry name" value="Aa-tRNA-synt_II"/>
</dbReference>
<dbReference type="InterPro" id="IPR006195">
    <property type="entry name" value="aa-tRNA-synth_II"/>
</dbReference>
<dbReference type="InterPro" id="IPR045864">
    <property type="entry name" value="aa-tRNA-synth_II/BPL/LPL"/>
</dbReference>
<dbReference type="InterPro" id="IPR004522">
    <property type="entry name" value="Asn-tRNA-ligase"/>
</dbReference>
<dbReference type="InterPro" id="IPR002312">
    <property type="entry name" value="Asp/Asn-tRNA-synth_IIb"/>
</dbReference>
<dbReference type="InterPro" id="IPR012340">
    <property type="entry name" value="NA-bd_OB-fold"/>
</dbReference>
<dbReference type="InterPro" id="IPR004365">
    <property type="entry name" value="NA-bd_OB_tRNA"/>
</dbReference>
<dbReference type="NCBIfam" id="TIGR00457">
    <property type="entry name" value="asnS"/>
    <property type="match status" value="1"/>
</dbReference>
<dbReference type="NCBIfam" id="NF003037">
    <property type="entry name" value="PRK03932.1"/>
    <property type="match status" value="1"/>
</dbReference>
<dbReference type="PANTHER" id="PTHR22594:SF34">
    <property type="entry name" value="ASPARAGINE--TRNA LIGASE, MITOCHONDRIAL-RELATED"/>
    <property type="match status" value="1"/>
</dbReference>
<dbReference type="PANTHER" id="PTHR22594">
    <property type="entry name" value="ASPARTYL/LYSYL-TRNA SYNTHETASE"/>
    <property type="match status" value="1"/>
</dbReference>
<dbReference type="Pfam" id="PF00152">
    <property type="entry name" value="tRNA-synt_2"/>
    <property type="match status" value="1"/>
</dbReference>
<dbReference type="Pfam" id="PF01336">
    <property type="entry name" value="tRNA_anti-codon"/>
    <property type="match status" value="1"/>
</dbReference>
<dbReference type="PRINTS" id="PR01042">
    <property type="entry name" value="TRNASYNTHASP"/>
</dbReference>
<dbReference type="SUPFAM" id="SSF55681">
    <property type="entry name" value="Class II aaRS and biotin synthetases"/>
    <property type="match status" value="1"/>
</dbReference>
<dbReference type="SUPFAM" id="SSF50249">
    <property type="entry name" value="Nucleic acid-binding proteins"/>
    <property type="match status" value="1"/>
</dbReference>
<dbReference type="PROSITE" id="PS50862">
    <property type="entry name" value="AA_TRNA_LIGASE_II"/>
    <property type="match status" value="1"/>
</dbReference>
<protein>
    <recommendedName>
        <fullName evidence="1">Asparagine--tRNA ligase</fullName>
        <ecNumber evidence="1">6.1.1.22</ecNumber>
    </recommendedName>
    <alternativeName>
        <fullName evidence="1">Asparaginyl-tRNA synthetase</fullName>
        <shortName evidence="1">AsnRS</shortName>
    </alternativeName>
</protein>